<name>IDH3G_BOVIN</name>
<reference key="1">
    <citation type="journal article" date="2005" name="BMC Genomics">
        <title>Characterization of 954 bovine full-CDS cDNA sequences.</title>
        <authorList>
            <person name="Harhay G.P."/>
            <person name="Sonstegard T.S."/>
            <person name="Keele J.W."/>
            <person name="Heaton M.P."/>
            <person name="Clawson M.L."/>
            <person name="Snelling W.M."/>
            <person name="Wiedmann R.T."/>
            <person name="Van Tassell C.P."/>
            <person name="Smith T.P.L."/>
        </authorList>
    </citation>
    <scope>NUCLEOTIDE SEQUENCE [LARGE SCALE MRNA]</scope>
</reference>
<reference key="2">
    <citation type="submission" date="2006-06" db="EMBL/GenBank/DDBJ databases">
        <authorList>
            <consortium name="NIH - Mammalian Gene Collection (MGC) project"/>
        </authorList>
    </citation>
    <scope>NUCLEOTIDE SEQUENCE [LARGE SCALE MRNA]</scope>
    <source>
        <strain>Hereford</strain>
        <tissue>Brain cortex</tissue>
    </source>
</reference>
<protein>
    <recommendedName>
        <fullName>Isocitrate dehydrogenase [NAD] subunit gamma, mitochondrial</fullName>
    </recommendedName>
    <alternativeName>
        <fullName>Isocitric dehydrogenase subunit gamma</fullName>
    </alternativeName>
    <alternativeName>
        <fullName>NAD(+)-specific ICDH subunit gamma</fullName>
    </alternativeName>
</protein>
<feature type="transit peptide" description="Mitochondrion" evidence="1">
    <location>
        <begin position="1"/>
        <end position="39"/>
    </location>
</feature>
<feature type="chain" id="PRO_0000236185" description="Isocitrate dehydrogenase [NAD] subunit gamma, mitochondrial">
    <location>
        <begin position="40"/>
        <end position="392"/>
    </location>
</feature>
<feature type="binding site" evidence="2">
    <location>
        <position position="119"/>
    </location>
    <ligand>
        <name>citrate</name>
        <dbReference type="ChEBI" id="CHEBI:16947"/>
        <note>allosteric activator</note>
    </ligand>
</feature>
<feature type="binding site" evidence="2">
    <location>
        <position position="132"/>
    </location>
    <ligand>
        <name>citrate</name>
        <dbReference type="ChEBI" id="CHEBI:16947"/>
        <note>allosteric activator</note>
    </ligand>
</feature>
<feature type="binding site" evidence="2">
    <location>
        <position position="135"/>
    </location>
    <ligand>
        <name>substrate</name>
    </ligand>
</feature>
<feature type="binding site" evidence="2">
    <location>
        <position position="166"/>
    </location>
    <ligand>
        <name>substrate</name>
    </ligand>
</feature>
<feature type="binding site" evidence="2">
    <location>
        <position position="253"/>
    </location>
    <ligand>
        <name>Mn(2+)</name>
        <dbReference type="ChEBI" id="CHEBI:29035"/>
        <note>ligand shared with catalytic subunit</note>
    </ligand>
</feature>
<feature type="binding site" evidence="2">
    <location>
        <position position="253"/>
    </location>
    <ligand>
        <name>substrate</name>
    </ligand>
</feature>
<feature type="binding site" evidence="2">
    <location>
        <position position="311"/>
    </location>
    <ligand>
        <name>ADP</name>
        <dbReference type="ChEBI" id="CHEBI:456216"/>
        <note>allosteric activator</note>
    </ligand>
</feature>
<feature type="binding site" evidence="2">
    <location>
        <position position="312"/>
    </location>
    <ligand>
        <name>ADP</name>
        <dbReference type="ChEBI" id="CHEBI:456216"/>
        <note>allosteric activator</note>
    </ligand>
</feature>
<feature type="binding site" evidence="2">
    <location>
        <position position="323"/>
    </location>
    <ligand>
        <name>ADP</name>
        <dbReference type="ChEBI" id="CHEBI:456216"/>
        <note>allosteric activator</note>
    </ligand>
</feature>
<proteinExistence type="evidence at transcript level"/>
<keyword id="KW-0067">ATP-binding</keyword>
<keyword id="KW-0460">Magnesium</keyword>
<keyword id="KW-0464">Manganese</keyword>
<keyword id="KW-0479">Metal-binding</keyword>
<keyword id="KW-0496">Mitochondrion</keyword>
<keyword id="KW-0547">Nucleotide-binding</keyword>
<keyword id="KW-1185">Reference proteome</keyword>
<keyword id="KW-0809">Transit peptide</keyword>
<keyword id="KW-0816">Tricarboxylic acid cycle</keyword>
<dbReference type="EMBL" id="BT021907">
    <property type="protein sequence ID" value="AAX46754.1"/>
    <property type="molecule type" value="mRNA"/>
</dbReference>
<dbReference type="EMBL" id="BC118275">
    <property type="protein sequence ID" value="AAI18276.1"/>
    <property type="molecule type" value="mRNA"/>
</dbReference>
<dbReference type="RefSeq" id="NP_001069781.1">
    <property type="nucleotide sequence ID" value="NM_001076313.1"/>
</dbReference>
<dbReference type="SMR" id="Q58CP0"/>
<dbReference type="FunCoup" id="Q58CP0">
    <property type="interactions" value="1857"/>
</dbReference>
<dbReference type="STRING" id="9913.ENSBTAP00000061017"/>
<dbReference type="PaxDb" id="9913-ENSBTAP00000001405"/>
<dbReference type="GeneID" id="614145"/>
<dbReference type="KEGG" id="bta:614145"/>
<dbReference type="CTD" id="3421"/>
<dbReference type="eggNOG" id="KOG0784">
    <property type="taxonomic scope" value="Eukaryota"/>
</dbReference>
<dbReference type="InParanoid" id="Q58CP0"/>
<dbReference type="OrthoDB" id="10261637at2759"/>
<dbReference type="TreeFam" id="TF315033"/>
<dbReference type="SABIO-RK" id="Q58CP0"/>
<dbReference type="Proteomes" id="UP000009136">
    <property type="component" value="Unplaced"/>
</dbReference>
<dbReference type="GO" id="GO:0005739">
    <property type="term" value="C:mitochondrion"/>
    <property type="evidence" value="ECO:0000250"/>
    <property type="project" value="AgBase"/>
</dbReference>
<dbReference type="GO" id="GO:0005524">
    <property type="term" value="F:ATP binding"/>
    <property type="evidence" value="ECO:0007669"/>
    <property type="project" value="UniProtKB-KW"/>
</dbReference>
<dbReference type="GO" id="GO:0004449">
    <property type="term" value="F:isocitrate dehydrogenase (NAD+) activity"/>
    <property type="evidence" value="ECO:0000250"/>
    <property type="project" value="UniProtKB"/>
</dbReference>
<dbReference type="GO" id="GO:0000287">
    <property type="term" value="F:magnesium ion binding"/>
    <property type="evidence" value="ECO:0000250"/>
    <property type="project" value="UniProtKB"/>
</dbReference>
<dbReference type="GO" id="GO:0051287">
    <property type="term" value="F:NAD binding"/>
    <property type="evidence" value="ECO:0007669"/>
    <property type="project" value="InterPro"/>
</dbReference>
<dbReference type="GO" id="GO:0006102">
    <property type="term" value="P:isocitrate metabolic process"/>
    <property type="evidence" value="ECO:0000250"/>
    <property type="project" value="UniProtKB"/>
</dbReference>
<dbReference type="GO" id="GO:0006099">
    <property type="term" value="P:tricarboxylic acid cycle"/>
    <property type="evidence" value="ECO:0000318"/>
    <property type="project" value="GO_Central"/>
</dbReference>
<dbReference type="FunFam" id="3.40.718.10:FF:000011">
    <property type="entry name" value="Isocitrate dehydrogenase [NAD] subunit, mitochondrial"/>
    <property type="match status" value="1"/>
</dbReference>
<dbReference type="Gene3D" id="3.40.718.10">
    <property type="entry name" value="Isopropylmalate Dehydrogenase"/>
    <property type="match status" value="1"/>
</dbReference>
<dbReference type="InterPro" id="IPR019818">
    <property type="entry name" value="IsoCit/isopropylmalate_DH_CS"/>
</dbReference>
<dbReference type="InterPro" id="IPR004434">
    <property type="entry name" value="Isocitrate_DH_NAD"/>
</dbReference>
<dbReference type="InterPro" id="IPR024084">
    <property type="entry name" value="IsoPropMal-DH-like_dom"/>
</dbReference>
<dbReference type="NCBIfam" id="TIGR00175">
    <property type="entry name" value="mito_nad_idh"/>
    <property type="match status" value="1"/>
</dbReference>
<dbReference type="PANTHER" id="PTHR11835">
    <property type="entry name" value="DECARBOXYLATING DEHYDROGENASES-ISOCITRATE, ISOPROPYLMALATE, TARTRATE"/>
    <property type="match status" value="1"/>
</dbReference>
<dbReference type="PANTHER" id="PTHR11835:SF78">
    <property type="entry name" value="ISOCITRATE DEHYDROGENASE [NAD] SUBUNIT GAMMA, MITOCHONDRIAL"/>
    <property type="match status" value="1"/>
</dbReference>
<dbReference type="Pfam" id="PF00180">
    <property type="entry name" value="Iso_dh"/>
    <property type="match status" value="1"/>
</dbReference>
<dbReference type="SMART" id="SM01329">
    <property type="entry name" value="Iso_dh"/>
    <property type="match status" value="1"/>
</dbReference>
<dbReference type="SUPFAM" id="SSF53659">
    <property type="entry name" value="Isocitrate/Isopropylmalate dehydrogenase-like"/>
    <property type="match status" value="1"/>
</dbReference>
<dbReference type="PROSITE" id="PS00470">
    <property type="entry name" value="IDH_IMDH"/>
    <property type="match status" value="1"/>
</dbReference>
<sequence length="392" mass="42863">MALKVATAAGGAVKAALRPALLWRPWEVLGSHEAPRRSFSQQTIPPSAKYGGRHTVTMIPGDGIGPELMLHVKSVFRHACVPVDFEEVHVSSTADEEDIRNAIMAIRRNRVALKGNIETNHNLPPSHKSRNNILRTSLDLYANVIHCKSLPGVVTRHRDIDILIVRENTEGEYSSLEHESVAGVVESLKIITKAKSLRIAEYAFQLAQESGRKKVTAVHKANIMKLGDGLFLQCCREVAARYPQITFENMIVDNTTMQLVSRPQQFDVMVMPNLYGNIVNNVCAGLVGGPGLVAGANYGHVYAVFETATRNTGKSIANKNIANPTATLLASCMMLDHLKLHSYATSIRKAVLASMDNENMHTPDIGGQGTTSEAIQDIIRHIRVINGRAVEA</sequence>
<gene>
    <name type="primary">IDH3G</name>
</gene>
<evidence type="ECO:0000250" key="1"/>
<evidence type="ECO:0000250" key="2">
    <source>
        <dbReference type="UniProtKB" id="P51553"/>
    </source>
</evidence>
<evidence type="ECO:0000305" key="3"/>
<accession>Q58CP0</accession>
<accession>Q148J3</accession>
<organism>
    <name type="scientific">Bos taurus</name>
    <name type="common">Bovine</name>
    <dbReference type="NCBI Taxonomy" id="9913"/>
    <lineage>
        <taxon>Eukaryota</taxon>
        <taxon>Metazoa</taxon>
        <taxon>Chordata</taxon>
        <taxon>Craniata</taxon>
        <taxon>Vertebrata</taxon>
        <taxon>Euteleostomi</taxon>
        <taxon>Mammalia</taxon>
        <taxon>Eutheria</taxon>
        <taxon>Laurasiatheria</taxon>
        <taxon>Artiodactyla</taxon>
        <taxon>Ruminantia</taxon>
        <taxon>Pecora</taxon>
        <taxon>Bovidae</taxon>
        <taxon>Bovinae</taxon>
        <taxon>Bos</taxon>
    </lineage>
</organism>
<comment type="function">
    <text evidence="2">Regulatory subunit which plays a role in the allosteric regulation of the enzyme catalyzing the decarboxylation of isocitrate (ICT) into alpha-ketoglutarate. The heterodimer composed of the alpha (IDH3A) and beta (IDH3B) subunits and the heterodimer composed of the alpha (IDH3A) and gamma (IDH3G) subunits, have considerable basal activity but the full activity of the heterotetramer (containing two subunits of IDH3A, one of IDH3B and one of IDH3G) requires the assembly and cooperative function of both heterodimers.</text>
</comment>
<comment type="cofactor">
    <cofactor evidence="2">
        <name>Mg(2+)</name>
        <dbReference type="ChEBI" id="CHEBI:18420"/>
    </cofactor>
    <cofactor evidence="2">
        <name>Mn(2+)</name>
        <dbReference type="ChEBI" id="CHEBI:29035"/>
    </cofactor>
    <text evidence="2">Divalent metal cations; Mn(2+) or Mg(2+). Activity higher in presence of Mn(2+) than of Mg(2+). Binds 1 Mg(2+) or Mn(2+) ion per subunit.</text>
</comment>
<comment type="activity regulation">
    <text evidence="2">The heterotetramer and the heterodimer composed of IDH3A and IDH3G subunits can be allosterically activated by citrate (CIT) or/and ADP, and the two activators can act independently or synergistically. The heterodimer composed of IDH3A and IDH3B subunits cannot be allosterically regulated and the allosteric regulation of the heterotetramer is through the IDH3G subunit and not the IDH3B subunit. The IDH3G subunit contains the allosteric site which consists of a CIT-binding site and an ADP-binding site, and the binding of CIT and ADP causes conformational changes at the allosteric site which are transmitted to the active site in the catalytic subunit (IDH3A) through a cascade of conformational changes at the heterodimer interface, leading to stabilization of the isocitrate-binding at the active site and thus activation of the enzyme. ATP can activate the heterotetramer and the heterodimer composed of IDH3A and IDH3G subunits at low concentrations but inhibits their activities at high concentrations, whereas ATP exhibits only inhibitory effect on the heterodimer composed of IDH3A and IDH3B subunits.</text>
</comment>
<comment type="subunit">
    <text evidence="2">Heterooligomer of subunits alpha (IDH3A), beta (IDH3B), and gamma (IDH3G) in the apparent ratio of 2:1:1. The heterodimer containing one IDH3A and one IDH3B subunit and the heterodimer containing one IDH3A and one IDH3G subunit assemble into a heterotetramer (which contains two subunits of IDH3A, one of IDH3B and one of IDH3G) and further into the heterooctamer.</text>
</comment>
<comment type="subcellular location">
    <subcellularLocation>
        <location evidence="1">Mitochondrion</location>
    </subcellularLocation>
</comment>
<comment type="similarity">
    <text evidence="3">Belongs to the isocitrate and isopropylmalate dehydrogenases family.</text>
</comment>